<keyword id="KW-0066">ATP synthesis</keyword>
<keyword id="KW-0997">Cell inner membrane</keyword>
<keyword id="KW-1003">Cell membrane</keyword>
<keyword id="KW-0138">CF(0)</keyword>
<keyword id="KW-0375">Hydrogen ion transport</keyword>
<keyword id="KW-0406">Ion transport</keyword>
<keyword id="KW-0472">Membrane</keyword>
<keyword id="KW-0812">Transmembrane</keyword>
<keyword id="KW-1133">Transmembrane helix</keyword>
<keyword id="KW-0813">Transport</keyword>
<evidence type="ECO:0000255" key="1">
    <source>
        <dbReference type="HAMAP-Rule" id="MF_01393"/>
    </source>
</evidence>
<comment type="function">
    <text evidence="1">Key component of the proton channel; it plays a direct role in the translocation of protons across the membrane.</text>
</comment>
<comment type="subunit">
    <text evidence="1">F-type ATPases have 2 components, CF(1) - the catalytic core - and CF(0) - the membrane proton channel. CF(1) has five subunits: alpha(3), beta(3), gamma(1), delta(1), epsilon(1). CF(0) has three main subunits: a(1), b(2) and c(9-12). The alpha and beta chains form an alternating ring which encloses part of the gamma chain. CF(1) is attached to CF(0) by a central stalk formed by the gamma and epsilon chains, while a peripheral stalk is formed by the delta and b chains.</text>
</comment>
<comment type="subcellular location">
    <subcellularLocation>
        <location evidence="1">Cell inner membrane</location>
        <topology evidence="1">Multi-pass membrane protein</topology>
    </subcellularLocation>
</comment>
<comment type="similarity">
    <text evidence="1">Belongs to the ATPase A chain family.</text>
</comment>
<feature type="chain" id="PRO_0000362434" description="ATP synthase subunit a">
    <location>
        <begin position="1"/>
        <end position="271"/>
    </location>
</feature>
<feature type="transmembrane region" description="Helical" evidence="1">
    <location>
        <begin position="38"/>
        <end position="58"/>
    </location>
</feature>
<feature type="transmembrane region" description="Helical" evidence="1">
    <location>
        <begin position="100"/>
        <end position="120"/>
    </location>
</feature>
<feature type="transmembrane region" description="Helical" evidence="1">
    <location>
        <begin position="146"/>
        <end position="166"/>
    </location>
</feature>
<feature type="transmembrane region" description="Helical" evidence="1">
    <location>
        <begin position="220"/>
        <end position="240"/>
    </location>
</feature>
<feature type="transmembrane region" description="Helical" evidence="1">
    <location>
        <begin position="242"/>
        <end position="262"/>
    </location>
</feature>
<accession>Q57HX3</accession>
<protein>
    <recommendedName>
        <fullName evidence="1">ATP synthase subunit a</fullName>
    </recommendedName>
    <alternativeName>
        <fullName evidence="1">ATP synthase F0 sector subunit a</fullName>
    </alternativeName>
    <alternativeName>
        <fullName evidence="1">F-ATPase subunit 6</fullName>
    </alternativeName>
</protein>
<reference key="1">
    <citation type="journal article" date="2005" name="Nucleic Acids Res.">
        <title>The genome sequence of Salmonella enterica serovar Choleraesuis, a highly invasive and resistant zoonotic pathogen.</title>
        <authorList>
            <person name="Chiu C.-H."/>
            <person name="Tang P."/>
            <person name="Chu C."/>
            <person name="Hu S."/>
            <person name="Bao Q."/>
            <person name="Yu J."/>
            <person name="Chou Y.-Y."/>
            <person name="Wang H.-S."/>
            <person name="Lee Y.-S."/>
        </authorList>
    </citation>
    <scope>NUCLEOTIDE SEQUENCE [LARGE SCALE GENOMIC DNA]</scope>
    <source>
        <strain>SC-B67</strain>
    </source>
</reference>
<organism>
    <name type="scientific">Salmonella choleraesuis (strain SC-B67)</name>
    <dbReference type="NCBI Taxonomy" id="321314"/>
    <lineage>
        <taxon>Bacteria</taxon>
        <taxon>Pseudomonadati</taxon>
        <taxon>Pseudomonadota</taxon>
        <taxon>Gammaproteobacteria</taxon>
        <taxon>Enterobacterales</taxon>
        <taxon>Enterobacteriaceae</taxon>
        <taxon>Salmonella</taxon>
    </lineage>
</organism>
<sequence length="271" mass="30417">MASENMTPQEYIGHHLNNLQLDLRTFSLVDPQNPPATFWTLNIDSMFFSVVLGLLFLVMFRSVAKKATSGVPGKFQTAIELIVGFVHGSVKDMYHGKSKLIAPLALTIFVWVFLMNLMDLLPIDLLPYIAEHWLGLPATRVVPSADVNITLSMALGVFILILFYSIKMKGIGGFAKELTLQPFNHWAFIPVNLILEGVSLLSKPVSLGLRLFGNMYAGELIFILIAGLLPWWSQWILNVPWAIFHILIITLQAFIFMVLTIVYLSMASEEH</sequence>
<gene>
    <name evidence="1" type="primary">atpB</name>
    <name type="ordered locus">SCH_3783</name>
</gene>
<proteinExistence type="inferred from homology"/>
<dbReference type="EMBL" id="AE017220">
    <property type="protein sequence ID" value="AAX67689.1"/>
    <property type="molecule type" value="Genomic_DNA"/>
</dbReference>
<dbReference type="RefSeq" id="WP_000135632.1">
    <property type="nucleotide sequence ID" value="NC_006905.1"/>
</dbReference>
<dbReference type="SMR" id="Q57HX3"/>
<dbReference type="KEGG" id="sec:SCH_3783"/>
<dbReference type="HOGENOM" id="CLU_041018_1_0_6"/>
<dbReference type="Proteomes" id="UP000000538">
    <property type="component" value="Chromosome"/>
</dbReference>
<dbReference type="GO" id="GO:0005886">
    <property type="term" value="C:plasma membrane"/>
    <property type="evidence" value="ECO:0007669"/>
    <property type="project" value="UniProtKB-SubCell"/>
</dbReference>
<dbReference type="GO" id="GO:0045259">
    <property type="term" value="C:proton-transporting ATP synthase complex"/>
    <property type="evidence" value="ECO:0007669"/>
    <property type="project" value="UniProtKB-KW"/>
</dbReference>
<dbReference type="GO" id="GO:0046933">
    <property type="term" value="F:proton-transporting ATP synthase activity, rotational mechanism"/>
    <property type="evidence" value="ECO:0007669"/>
    <property type="project" value="UniProtKB-UniRule"/>
</dbReference>
<dbReference type="GO" id="GO:0042777">
    <property type="term" value="P:proton motive force-driven plasma membrane ATP synthesis"/>
    <property type="evidence" value="ECO:0007669"/>
    <property type="project" value="TreeGrafter"/>
</dbReference>
<dbReference type="CDD" id="cd00310">
    <property type="entry name" value="ATP-synt_Fo_a_6"/>
    <property type="match status" value="1"/>
</dbReference>
<dbReference type="FunFam" id="1.20.120.220:FF:000002">
    <property type="entry name" value="ATP synthase subunit a"/>
    <property type="match status" value="1"/>
</dbReference>
<dbReference type="Gene3D" id="1.20.120.220">
    <property type="entry name" value="ATP synthase, F0 complex, subunit A"/>
    <property type="match status" value="1"/>
</dbReference>
<dbReference type="HAMAP" id="MF_01393">
    <property type="entry name" value="ATP_synth_a_bact"/>
    <property type="match status" value="1"/>
</dbReference>
<dbReference type="InterPro" id="IPR045082">
    <property type="entry name" value="ATP_syn_F0_a_bact/chloroplast"/>
</dbReference>
<dbReference type="InterPro" id="IPR000568">
    <property type="entry name" value="ATP_synth_F0_asu"/>
</dbReference>
<dbReference type="InterPro" id="IPR023011">
    <property type="entry name" value="ATP_synth_F0_asu_AS"/>
</dbReference>
<dbReference type="InterPro" id="IPR035908">
    <property type="entry name" value="F0_ATP_A_sf"/>
</dbReference>
<dbReference type="NCBIfam" id="TIGR01131">
    <property type="entry name" value="ATP_synt_6_or_A"/>
    <property type="match status" value="1"/>
</dbReference>
<dbReference type="NCBIfam" id="NF004477">
    <property type="entry name" value="PRK05815.1-1"/>
    <property type="match status" value="1"/>
</dbReference>
<dbReference type="PANTHER" id="PTHR42823">
    <property type="entry name" value="ATP SYNTHASE SUBUNIT A, CHLOROPLASTIC"/>
    <property type="match status" value="1"/>
</dbReference>
<dbReference type="PANTHER" id="PTHR42823:SF3">
    <property type="entry name" value="ATP SYNTHASE SUBUNIT A, CHLOROPLASTIC"/>
    <property type="match status" value="1"/>
</dbReference>
<dbReference type="Pfam" id="PF00119">
    <property type="entry name" value="ATP-synt_A"/>
    <property type="match status" value="1"/>
</dbReference>
<dbReference type="PRINTS" id="PR00123">
    <property type="entry name" value="ATPASEA"/>
</dbReference>
<dbReference type="SUPFAM" id="SSF81336">
    <property type="entry name" value="F1F0 ATP synthase subunit A"/>
    <property type="match status" value="1"/>
</dbReference>
<dbReference type="PROSITE" id="PS00449">
    <property type="entry name" value="ATPASE_A"/>
    <property type="match status" value="1"/>
</dbReference>
<name>ATP6_SALCH</name>